<evidence type="ECO:0000255" key="1">
    <source>
        <dbReference type="HAMAP-Rule" id="MF_01969"/>
    </source>
</evidence>
<proteinExistence type="inferred from homology"/>
<feature type="chain" id="PRO_0000362124" description="Kynurenine formamidase">
    <location>
        <begin position="1"/>
        <end position="209"/>
    </location>
</feature>
<feature type="active site" description="Proton donor/acceptor" evidence="1">
    <location>
        <position position="59"/>
    </location>
</feature>
<feature type="binding site" evidence="1">
    <location>
        <position position="19"/>
    </location>
    <ligand>
        <name>substrate</name>
    </ligand>
</feature>
<feature type="binding site" evidence="1">
    <location>
        <position position="49"/>
    </location>
    <ligand>
        <name>Zn(2+)</name>
        <dbReference type="ChEBI" id="CHEBI:29105"/>
        <label>1</label>
    </ligand>
</feature>
<feature type="binding site" evidence="1">
    <location>
        <position position="53"/>
    </location>
    <ligand>
        <name>Zn(2+)</name>
        <dbReference type="ChEBI" id="CHEBI:29105"/>
        <label>1</label>
    </ligand>
</feature>
<feature type="binding site" evidence="1">
    <location>
        <position position="55"/>
    </location>
    <ligand>
        <name>Zn(2+)</name>
        <dbReference type="ChEBI" id="CHEBI:29105"/>
        <label>1</label>
    </ligand>
</feature>
<feature type="binding site" evidence="1">
    <location>
        <position position="55"/>
    </location>
    <ligand>
        <name>Zn(2+)</name>
        <dbReference type="ChEBI" id="CHEBI:29105"/>
        <label>2</label>
    </ligand>
</feature>
<feature type="binding site" evidence="1">
    <location>
        <position position="160"/>
    </location>
    <ligand>
        <name>Zn(2+)</name>
        <dbReference type="ChEBI" id="CHEBI:29105"/>
        <label>2</label>
    </ligand>
</feature>
<feature type="binding site" evidence="1">
    <location>
        <position position="172"/>
    </location>
    <ligand>
        <name>Zn(2+)</name>
        <dbReference type="ChEBI" id="CHEBI:29105"/>
        <label>1</label>
    </ligand>
</feature>
<feature type="binding site" evidence="1">
    <location>
        <position position="172"/>
    </location>
    <ligand>
        <name>Zn(2+)</name>
        <dbReference type="ChEBI" id="CHEBI:29105"/>
        <label>2</label>
    </ligand>
</feature>
<accession>A4IT60</accession>
<comment type="function">
    <text evidence="1">Catalyzes the hydrolysis of N-formyl-L-kynurenine to L-kynurenine, the second step in the kynurenine pathway of tryptophan degradation.</text>
</comment>
<comment type="catalytic activity">
    <reaction evidence="1">
        <text>N-formyl-L-kynurenine + H2O = L-kynurenine + formate + H(+)</text>
        <dbReference type="Rhea" id="RHEA:13009"/>
        <dbReference type="ChEBI" id="CHEBI:15377"/>
        <dbReference type="ChEBI" id="CHEBI:15378"/>
        <dbReference type="ChEBI" id="CHEBI:15740"/>
        <dbReference type="ChEBI" id="CHEBI:57959"/>
        <dbReference type="ChEBI" id="CHEBI:58629"/>
        <dbReference type="EC" id="3.5.1.9"/>
    </reaction>
</comment>
<comment type="cofactor">
    <cofactor evidence="1">
        <name>Zn(2+)</name>
        <dbReference type="ChEBI" id="CHEBI:29105"/>
    </cofactor>
    <text evidence="1">Binds 2 zinc ions per subunit.</text>
</comment>
<comment type="pathway">
    <text evidence="1">Amino-acid degradation; L-tryptophan degradation via kynurenine pathway; L-kynurenine from L-tryptophan: step 2/2.</text>
</comment>
<comment type="subunit">
    <text evidence="1">Homodimer.</text>
</comment>
<comment type="similarity">
    <text evidence="1">Belongs to the Cyclase 1 superfamily. KynB family.</text>
</comment>
<protein>
    <recommendedName>
        <fullName evidence="1">Kynurenine formamidase</fullName>
        <shortName evidence="1">KFA</shortName>
        <shortName evidence="1">KFase</shortName>
        <ecNumber evidence="1">3.5.1.9</ecNumber>
    </recommendedName>
    <alternativeName>
        <fullName evidence="1">Arylformamidase</fullName>
    </alternativeName>
    <alternativeName>
        <fullName evidence="1">N-formylkynurenine formamidase</fullName>
        <shortName evidence="1">FKF</shortName>
    </alternativeName>
</protein>
<sequence length="209" mass="23327">MMNPWIDISQRLDEHIPVWPGDTPFSYRTRWNKAESGSVNVGQITMSTHTGTHIDAPFHFDNEGKRVIDLDLNIYIGPARVIHLSNPKKIGIDELQTIDLHGVTRLLIYTGAWTNRTTFPETIPYIDPPLAPYLKKYGVRLIGIDLPSVDPLTSKQLPAHHELHRCGIHILEGLVLDHVSPGDYELAALPLPLVNADGSPVRAALRKMG</sequence>
<reference key="1">
    <citation type="journal article" date="2007" name="Proc. Natl. Acad. Sci. U.S.A.">
        <title>Genome and proteome of long-chain alkane degrading Geobacillus thermodenitrificans NG80-2 isolated from a deep-subsurface oil reservoir.</title>
        <authorList>
            <person name="Feng L."/>
            <person name="Wang W."/>
            <person name="Cheng J."/>
            <person name="Ren Y."/>
            <person name="Zhao G."/>
            <person name="Gao C."/>
            <person name="Tang Y."/>
            <person name="Liu X."/>
            <person name="Han W."/>
            <person name="Peng X."/>
            <person name="Liu R."/>
            <person name="Wang L."/>
        </authorList>
    </citation>
    <scope>NUCLEOTIDE SEQUENCE [LARGE SCALE GENOMIC DNA]</scope>
    <source>
        <strain>NG80-2</strain>
    </source>
</reference>
<gene>
    <name evidence="1" type="primary">kynB</name>
    <name type="ordered locus">GTNG_3169</name>
</gene>
<name>KYNB_GEOTN</name>
<keyword id="KW-0378">Hydrolase</keyword>
<keyword id="KW-0479">Metal-binding</keyword>
<keyword id="KW-0823">Tryptophan catabolism</keyword>
<keyword id="KW-0862">Zinc</keyword>
<dbReference type="EC" id="3.5.1.9" evidence="1"/>
<dbReference type="EMBL" id="CP000557">
    <property type="protein sequence ID" value="ABO68514.1"/>
    <property type="molecule type" value="Genomic_DNA"/>
</dbReference>
<dbReference type="SMR" id="A4IT60"/>
<dbReference type="KEGG" id="gtn:GTNG_3169"/>
<dbReference type="eggNOG" id="COG1878">
    <property type="taxonomic scope" value="Bacteria"/>
</dbReference>
<dbReference type="HOGENOM" id="CLU_030671_3_1_9"/>
<dbReference type="UniPathway" id="UPA00333">
    <property type="reaction ID" value="UER00454"/>
</dbReference>
<dbReference type="Proteomes" id="UP000001578">
    <property type="component" value="Chromosome"/>
</dbReference>
<dbReference type="GO" id="GO:0004061">
    <property type="term" value="F:arylformamidase activity"/>
    <property type="evidence" value="ECO:0000250"/>
    <property type="project" value="UniProtKB"/>
</dbReference>
<dbReference type="GO" id="GO:0004328">
    <property type="term" value="F:formamidase activity"/>
    <property type="evidence" value="ECO:0007669"/>
    <property type="project" value="InterPro"/>
</dbReference>
<dbReference type="GO" id="GO:0008270">
    <property type="term" value="F:zinc ion binding"/>
    <property type="evidence" value="ECO:0007669"/>
    <property type="project" value="UniProtKB-UniRule"/>
</dbReference>
<dbReference type="GO" id="GO:0043420">
    <property type="term" value="P:anthranilate metabolic process"/>
    <property type="evidence" value="ECO:0000250"/>
    <property type="project" value="UniProtKB"/>
</dbReference>
<dbReference type="GO" id="GO:0019441">
    <property type="term" value="P:L-tryptophan catabolic process to kynurenine"/>
    <property type="evidence" value="ECO:0000250"/>
    <property type="project" value="UniProtKB"/>
</dbReference>
<dbReference type="FunFam" id="3.50.30.50:FF:000001">
    <property type="entry name" value="Kynurenine formamidase"/>
    <property type="match status" value="1"/>
</dbReference>
<dbReference type="Gene3D" id="3.50.30.50">
    <property type="entry name" value="Putative cyclase"/>
    <property type="match status" value="1"/>
</dbReference>
<dbReference type="HAMAP" id="MF_01969">
    <property type="entry name" value="KynB"/>
    <property type="match status" value="1"/>
</dbReference>
<dbReference type="InterPro" id="IPR007325">
    <property type="entry name" value="KFase/CYL"/>
</dbReference>
<dbReference type="InterPro" id="IPR037175">
    <property type="entry name" value="KFase_sf"/>
</dbReference>
<dbReference type="InterPro" id="IPR017484">
    <property type="entry name" value="Kynurenine_formamidase_bac"/>
</dbReference>
<dbReference type="NCBIfam" id="TIGR03035">
    <property type="entry name" value="trp_arylform"/>
    <property type="match status" value="1"/>
</dbReference>
<dbReference type="PANTHER" id="PTHR31118">
    <property type="entry name" value="CYCLASE-LIKE PROTEIN 2"/>
    <property type="match status" value="1"/>
</dbReference>
<dbReference type="PANTHER" id="PTHR31118:SF32">
    <property type="entry name" value="KYNURENINE FORMAMIDASE"/>
    <property type="match status" value="1"/>
</dbReference>
<dbReference type="Pfam" id="PF04199">
    <property type="entry name" value="Cyclase"/>
    <property type="match status" value="1"/>
</dbReference>
<dbReference type="SUPFAM" id="SSF102198">
    <property type="entry name" value="Putative cyclase"/>
    <property type="match status" value="1"/>
</dbReference>
<organism>
    <name type="scientific">Geobacillus thermodenitrificans (strain NG80-2)</name>
    <dbReference type="NCBI Taxonomy" id="420246"/>
    <lineage>
        <taxon>Bacteria</taxon>
        <taxon>Bacillati</taxon>
        <taxon>Bacillota</taxon>
        <taxon>Bacilli</taxon>
        <taxon>Bacillales</taxon>
        <taxon>Anoxybacillaceae</taxon>
        <taxon>Geobacillus</taxon>
    </lineage>
</organism>